<feature type="chain" id="PRO_0000218664" description="Kynureninase">
    <location>
        <begin position="1"/>
        <end position="437"/>
    </location>
</feature>
<feature type="binding site" evidence="1">
    <location>
        <position position="99"/>
    </location>
    <ligand>
        <name>pyridoxal 5'-phosphate</name>
        <dbReference type="ChEBI" id="CHEBI:597326"/>
    </ligand>
</feature>
<feature type="binding site" evidence="1">
    <location>
        <position position="100"/>
    </location>
    <ligand>
        <name>pyridoxal 5'-phosphate</name>
        <dbReference type="ChEBI" id="CHEBI:597326"/>
    </ligand>
</feature>
<feature type="binding site" evidence="1">
    <location>
        <begin position="127"/>
        <end position="130"/>
    </location>
    <ligand>
        <name>pyridoxal 5'-phosphate</name>
        <dbReference type="ChEBI" id="CHEBI:597326"/>
    </ligand>
</feature>
<feature type="binding site" evidence="1">
    <location>
        <position position="183"/>
    </location>
    <ligand>
        <name>pyridoxal 5'-phosphate</name>
        <dbReference type="ChEBI" id="CHEBI:597326"/>
    </ligand>
</feature>
<feature type="binding site" evidence="1">
    <location>
        <position position="212"/>
    </location>
    <ligand>
        <name>pyridoxal 5'-phosphate</name>
        <dbReference type="ChEBI" id="CHEBI:597326"/>
    </ligand>
</feature>
<feature type="binding site" evidence="1">
    <location>
        <position position="215"/>
    </location>
    <ligand>
        <name>pyridoxal 5'-phosphate</name>
        <dbReference type="ChEBI" id="CHEBI:597326"/>
    </ligand>
</feature>
<feature type="binding site" evidence="1">
    <location>
        <position position="237"/>
    </location>
    <ligand>
        <name>pyridoxal 5'-phosphate</name>
        <dbReference type="ChEBI" id="CHEBI:597326"/>
    </ligand>
</feature>
<feature type="binding site" evidence="1">
    <location>
        <position position="267"/>
    </location>
    <ligand>
        <name>pyridoxal 5'-phosphate</name>
        <dbReference type="ChEBI" id="CHEBI:597326"/>
    </ligand>
</feature>
<feature type="binding site" evidence="1">
    <location>
        <position position="295"/>
    </location>
    <ligand>
        <name>pyridoxal 5'-phosphate</name>
        <dbReference type="ChEBI" id="CHEBI:597326"/>
    </ligand>
</feature>
<feature type="modified residue" description="N6-(pyridoxal phosphate)lysine" evidence="1">
    <location>
        <position position="238"/>
    </location>
</feature>
<sequence length="437" mass="48411">MPLNFRDRFNVPVLKNGEEVAYLVGNSLGLMPHKTRDYVNQEMDAWSQLGVKGHFVSGKEDLGQDVHQGPWYSCDEPLHGLVGPILGASEDEVAIMNTLTSNIHSLFSAFYKPTAKRSKILFEAKAFPSDTYAMEAQARLHNLDPSEALIKLAPKDGLHTLSDDDIIKVIEEQGDEIAVVFFSGIQFYTGQLFDIPRITAAAKAKGCVVGWDLAHAAGNVPLKLHDWNVDFAVFCTYKYMNSGPGGIGGLFVHDKYADDQRPRLAGWWGNNAETRFKMLDEFDPIRGARGYKQSNPSVLCVLALRASLELFKEAGGIEKLRERSIELTNRLLKGLLASPHYIAPENIEIFGNSGKAWFTIITPQAEHQRGAQLSLLFGPDGTMKKVFDYLDDHGVLGDERNPDVIRLAPAPLYNNERDVDLAIKLINDSINLINGSA</sequence>
<protein>
    <recommendedName>
        <fullName evidence="1">Kynureninase</fullName>
        <ecNumber evidence="1">3.7.1.3</ecNumber>
    </recommendedName>
    <alternativeName>
        <fullName evidence="1">Biosynthesis of nicotinic acid protein 5</fullName>
    </alternativeName>
    <alternativeName>
        <fullName evidence="1">L-kynurenine hydrolase</fullName>
    </alternativeName>
</protein>
<dbReference type="EC" id="3.7.1.3" evidence="1"/>
<dbReference type="EMBL" id="CR382128">
    <property type="protein sequence ID" value="CAG83495.1"/>
    <property type="molecule type" value="Genomic_DNA"/>
</dbReference>
<dbReference type="RefSeq" id="XP_501242.1">
    <property type="nucleotide sequence ID" value="XM_501242.1"/>
</dbReference>
<dbReference type="SMR" id="Q6CDM0"/>
<dbReference type="FunCoup" id="Q6CDM0">
    <property type="interactions" value="212"/>
</dbReference>
<dbReference type="STRING" id="284591.Q6CDM0"/>
<dbReference type="EnsemblFungi" id="CAG83495">
    <property type="protein sequence ID" value="CAG83495"/>
    <property type="gene ID" value="YALI0_B22902g"/>
</dbReference>
<dbReference type="KEGG" id="yli:2906903"/>
<dbReference type="VEuPathDB" id="FungiDB:YALI0_B22902g"/>
<dbReference type="HOGENOM" id="CLU_003433_4_0_1"/>
<dbReference type="InParanoid" id="Q6CDM0"/>
<dbReference type="OMA" id="LPGWNSH"/>
<dbReference type="OrthoDB" id="74278at4891"/>
<dbReference type="UniPathway" id="UPA00253">
    <property type="reaction ID" value="UER00329"/>
</dbReference>
<dbReference type="UniPathway" id="UPA00334">
    <property type="reaction ID" value="UER00455"/>
</dbReference>
<dbReference type="Proteomes" id="UP000001300">
    <property type="component" value="Chromosome B"/>
</dbReference>
<dbReference type="GO" id="GO:0005737">
    <property type="term" value="C:cytoplasm"/>
    <property type="evidence" value="ECO:0000318"/>
    <property type="project" value="GO_Central"/>
</dbReference>
<dbReference type="GO" id="GO:0030429">
    <property type="term" value="F:kynureninase activity"/>
    <property type="evidence" value="ECO:0000318"/>
    <property type="project" value="GO_Central"/>
</dbReference>
<dbReference type="GO" id="GO:0030170">
    <property type="term" value="F:pyridoxal phosphate binding"/>
    <property type="evidence" value="ECO:0007669"/>
    <property type="project" value="UniProtKB-UniRule"/>
</dbReference>
<dbReference type="GO" id="GO:0034354">
    <property type="term" value="P:'de novo' NAD biosynthetic process from L-tryptophan"/>
    <property type="evidence" value="ECO:0007669"/>
    <property type="project" value="UniProtKB-UniRule"/>
</dbReference>
<dbReference type="GO" id="GO:0043420">
    <property type="term" value="P:anthranilate metabolic process"/>
    <property type="evidence" value="ECO:0000318"/>
    <property type="project" value="GO_Central"/>
</dbReference>
<dbReference type="GO" id="GO:0097053">
    <property type="term" value="P:L-kynurenine catabolic process"/>
    <property type="evidence" value="ECO:0007669"/>
    <property type="project" value="UniProtKB-UniRule"/>
</dbReference>
<dbReference type="GO" id="GO:0019441">
    <property type="term" value="P:L-tryptophan catabolic process to kynurenine"/>
    <property type="evidence" value="ECO:0000318"/>
    <property type="project" value="GO_Central"/>
</dbReference>
<dbReference type="GO" id="GO:0019805">
    <property type="term" value="P:quinolinate biosynthetic process"/>
    <property type="evidence" value="ECO:0007669"/>
    <property type="project" value="UniProtKB-UniRule"/>
</dbReference>
<dbReference type="FunFam" id="3.40.640.10:FF:000031">
    <property type="entry name" value="Kynureninase"/>
    <property type="match status" value="1"/>
</dbReference>
<dbReference type="FunFam" id="3.90.1150.10:FF:000302">
    <property type="entry name" value="Kynureninase"/>
    <property type="match status" value="1"/>
</dbReference>
<dbReference type="Gene3D" id="3.90.1150.10">
    <property type="entry name" value="Aspartate Aminotransferase, domain 1"/>
    <property type="match status" value="1"/>
</dbReference>
<dbReference type="Gene3D" id="3.40.640.10">
    <property type="entry name" value="Type I PLP-dependent aspartate aminotransferase-like (Major domain)"/>
    <property type="match status" value="1"/>
</dbReference>
<dbReference type="HAMAP" id="MF_01970">
    <property type="entry name" value="Kynureninase"/>
    <property type="match status" value="1"/>
</dbReference>
<dbReference type="InterPro" id="IPR000192">
    <property type="entry name" value="Aminotrans_V_dom"/>
</dbReference>
<dbReference type="InterPro" id="IPR010111">
    <property type="entry name" value="Kynureninase"/>
</dbReference>
<dbReference type="InterPro" id="IPR015424">
    <property type="entry name" value="PyrdxlP-dep_Trfase"/>
</dbReference>
<dbReference type="InterPro" id="IPR015421">
    <property type="entry name" value="PyrdxlP-dep_Trfase_major"/>
</dbReference>
<dbReference type="InterPro" id="IPR015422">
    <property type="entry name" value="PyrdxlP-dep_Trfase_small"/>
</dbReference>
<dbReference type="NCBIfam" id="TIGR01814">
    <property type="entry name" value="kynureninase"/>
    <property type="match status" value="1"/>
</dbReference>
<dbReference type="PANTHER" id="PTHR14084">
    <property type="entry name" value="KYNURENINASE"/>
    <property type="match status" value="1"/>
</dbReference>
<dbReference type="PANTHER" id="PTHR14084:SF0">
    <property type="entry name" value="KYNURENINASE"/>
    <property type="match status" value="1"/>
</dbReference>
<dbReference type="Pfam" id="PF00266">
    <property type="entry name" value="Aminotran_5"/>
    <property type="match status" value="1"/>
</dbReference>
<dbReference type="Pfam" id="PF22580">
    <property type="entry name" value="KYNU_C"/>
    <property type="match status" value="1"/>
</dbReference>
<dbReference type="PIRSF" id="PIRSF038800">
    <property type="entry name" value="KYNU"/>
    <property type="match status" value="1"/>
</dbReference>
<dbReference type="SUPFAM" id="SSF53383">
    <property type="entry name" value="PLP-dependent transferases"/>
    <property type="match status" value="1"/>
</dbReference>
<proteinExistence type="inferred from homology"/>
<gene>
    <name evidence="1" type="primary">BNA5</name>
    <name type="ordered locus">YALI0B22902g</name>
</gene>
<keyword id="KW-0963">Cytoplasm</keyword>
<keyword id="KW-0378">Hydrolase</keyword>
<keyword id="KW-0662">Pyridine nucleotide biosynthesis</keyword>
<keyword id="KW-0663">Pyridoxal phosphate</keyword>
<keyword id="KW-1185">Reference proteome</keyword>
<accession>Q6CDM0</accession>
<reference key="1">
    <citation type="journal article" date="2004" name="Nature">
        <title>Genome evolution in yeasts.</title>
        <authorList>
            <person name="Dujon B."/>
            <person name="Sherman D."/>
            <person name="Fischer G."/>
            <person name="Durrens P."/>
            <person name="Casaregola S."/>
            <person name="Lafontaine I."/>
            <person name="de Montigny J."/>
            <person name="Marck C."/>
            <person name="Neuveglise C."/>
            <person name="Talla E."/>
            <person name="Goffard N."/>
            <person name="Frangeul L."/>
            <person name="Aigle M."/>
            <person name="Anthouard V."/>
            <person name="Babour A."/>
            <person name="Barbe V."/>
            <person name="Barnay S."/>
            <person name="Blanchin S."/>
            <person name="Beckerich J.-M."/>
            <person name="Beyne E."/>
            <person name="Bleykasten C."/>
            <person name="Boisrame A."/>
            <person name="Boyer J."/>
            <person name="Cattolico L."/>
            <person name="Confanioleri F."/>
            <person name="de Daruvar A."/>
            <person name="Despons L."/>
            <person name="Fabre E."/>
            <person name="Fairhead C."/>
            <person name="Ferry-Dumazet H."/>
            <person name="Groppi A."/>
            <person name="Hantraye F."/>
            <person name="Hennequin C."/>
            <person name="Jauniaux N."/>
            <person name="Joyet P."/>
            <person name="Kachouri R."/>
            <person name="Kerrest A."/>
            <person name="Koszul R."/>
            <person name="Lemaire M."/>
            <person name="Lesur I."/>
            <person name="Ma L."/>
            <person name="Muller H."/>
            <person name="Nicaud J.-M."/>
            <person name="Nikolski M."/>
            <person name="Oztas S."/>
            <person name="Ozier-Kalogeropoulos O."/>
            <person name="Pellenz S."/>
            <person name="Potier S."/>
            <person name="Richard G.-F."/>
            <person name="Straub M.-L."/>
            <person name="Suleau A."/>
            <person name="Swennen D."/>
            <person name="Tekaia F."/>
            <person name="Wesolowski-Louvel M."/>
            <person name="Westhof E."/>
            <person name="Wirth B."/>
            <person name="Zeniou-Meyer M."/>
            <person name="Zivanovic Y."/>
            <person name="Bolotin-Fukuhara M."/>
            <person name="Thierry A."/>
            <person name="Bouchier C."/>
            <person name="Caudron B."/>
            <person name="Scarpelli C."/>
            <person name="Gaillardin C."/>
            <person name="Weissenbach J."/>
            <person name="Wincker P."/>
            <person name="Souciet J.-L."/>
        </authorList>
    </citation>
    <scope>NUCLEOTIDE SEQUENCE [LARGE SCALE GENOMIC DNA]</scope>
    <source>
        <strain>CLIB 122 / E 150</strain>
    </source>
</reference>
<name>KYNU_YARLI</name>
<comment type="function">
    <text evidence="1">Catalyzes the cleavage of L-kynurenine (L-Kyn) and L-3-hydroxykynurenine (L-3OHKyn) into anthranilic acid (AA) and 3-hydroxyanthranilic acid (3-OHAA), respectively.</text>
</comment>
<comment type="catalytic activity">
    <reaction evidence="1">
        <text>L-kynurenine + H2O = anthranilate + L-alanine + H(+)</text>
        <dbReference type="Rhea" id="RHEA:16813"/>
        <dbReference type="ChEBI" id="CHEBI:15377"/>
        <dbReference type="ChEBI" id="CHEBI:15378"/>
        <dbReference type="ChEBI" id="CHEBI:16567"/>
        <dbReference type="ChEBI" id="CHEBI:57959"/>
        <dbReference type="ChEBI" id="CHEBI:57972"/>
        <dbReference type="EC" id="3.7.1.3"/>
    </reaction>
</comment>
<comment type="catalytic activity">
    <reaction evidence="1">
        <text>3-hydroxy-L-kynurenine + H2O = 3-hydroxyanthranilate + L-alanine + H(+)</text>
        <dbReference type="Rhea" id="RHEA:25143"/>
        <dbReference type="ChEBI" id="CHEBI:15377"/>
        <dbReference type="ChEBI" id="CHEBI:15378"/>
        <dbReference type="ChEBI" id="CHEBI:36559"/>
        <dbReference type="ChEBI" id="CHEBI:57972"/>
        <dbReference type="ChEBI" id="CHEBI:58125"/>
        <dbReference type="EC" id="3.7.1.3"/>
    </reaction>
</comment>
<comment type="cofactor">
    <cofactor evidence="1">
        <name>pyridoxal 5'-phosphate</name>
        <dbReference type="ChEBI" id="CHEBI:597326"/>
    </cofactor>
</comment>
<comment type="pathway">
    <text evidence="1">Amino-acid degradation; L-kynurenine degradation; L-alanine and anthranilate from L-kynurenine: step 1/1.</text>
</comment>
<comment type="pathway">
    <text evidence="1">Cofactor biosynthesis; NAD(+) biosynthesis; quinolinate from L-kynurenine: step 2/3.</text>
</comment>
<comment type="subunit">
    <text evidence="1">Homodimer.</text>
</comment>
<comment type="subcellular location">
    <subcellularLocation>
        <location evidence="1">Cytoplasm</location>
    </subcellularLocation>
</comment>
<comment type="similarity">
    <text evidence="1">Belongs to the kynureninase family.</text>
</comment>
<organism>
    <name type="scientific">Yarrowia lipolytica (strain CLIB 122 / E 150)</name>
    <name type="common">Yeast</name>
    <name type="synonym">Candida lipolytica</name>
    <dbReference type="NCBI Taxonomy" id="284591"/>
    <lineage>
        <taxon>Eukaryota</taxon>
        <taxon>Fungi</taxon>
        <taxon>Dikarya</taxon>
        <taxon>Ascomycota</taxon>
        <taxon>Saccharomycotina</taxon>
        <taxon>Dipodascomycetes</taxon>
        <taxon>Dipodascales</taxon>
        <taxon>Dipodascales incertae sedis</taxon>
        <taxon>Yarrowia</taxon>
    </lineage>
</organism>
<evidence type="ECO:0000255" key="1">
    <source>
        <dbReference type="HAMAP-Rule" id="MF_03017"/>
    </source>
</evidence>